<organismHost>
    <name type="scientific">Acanthamoeba polyphaga</name>
    <name type="common">Amoeba</name>
    <dbReference type="NCBI Taxonomy" id="5757"/>
</organismHost>
<accession>Q5UPM1</accession>
<keyword id="KW-1185">Reference proteome</keyword>
<sequence length="173" mass="20399">MSSNLPEFNYLSEYNSGNYFHLHESIYENAHINIYYKIKFDPITYLMLVDKINRIKETDMFYITYKTETANIFVAKLNYMIKLPIQVLCLESVFENPKDTKILRPEINNISLCKYKDNISVTINIDLTNFSKILDNIDHINSTINCTDNNNFLDIDGNHNDNNQFNKKKLCFL</sequence>
<proteinExistence type="predicted"/>
<dbReference type="EMBL" id="AY653733">
    <property type="protein sequence ID" value="AAV50424.1"/>
    <property type="molecule type" value="Genomic_DNA"/>
</dbReference>
<dbReference type="KEGG" id="vg:9924749"/>
<dbReference type="Proteomes" id="UP000001134">
    <property type="component" value="Genome"/>
</dbReference>
<protein>
    <recommendedName>
        <fullName>Uncharacterized protein L149</fullName>
    </recommendedName>
</protein>
<gene>
    <name type="ordered locus">MIMI_L149</name>
</gene>
<feature type="chain" id="PRO_0000071221" description="Uncharacterized protein L149">
    <location>
        <begin position="1"/>
        <end position="173"/>
    </location>
</feature>
<name>YL149_MIMIV</name>
<reference key="1">
    <citation type="journal article" date="2004" name="Science">
        <title>The 1.2-megabase genome sequence of Mimivirus.</title>
        <authorList>
            <person name="Raoult D."/>
            <person name="Audic S."/>
            <person name="Robert C."/>
            <person name="Abergel C."/>
            <person name="Renesto P."/>
            <person name="Ogata H."/>
            <person name="La Scola B."/>
            <person name="Susan M."/>
            <person name="Claverie J.-M."/>
        </authorList>
    </citation>
    <scope>NUCLEOTIDE SEQUENCE [LARGE SCALE GENOMIC DNA]</scope>
    <source>
        <strain>Rowbotham-Bradford</strain>
    </source>
</reference>
<organism>
    <name type="scientific">Acanthamoeba polyphaga mimivirus</name>
    <name type="common">APMV</name>
    <dbReference type="NCBI Taxonomy" id="212035"/>
    <lineage>
        <taxon>Viruses</taxon>
        <taxon>Varidnaviria</taxon>
        <taxon>Bamfordvirae</taxon>
        <taxon>Nucleocytoviricota</taxon>
        <taxon>Megaviricetes</taxon>
        <taxon>Imitervirales</taxon>
        <taxon>Mimiviridae</taxon>
        <taxon>Megamimivirinae</taxon>
        <taxon>Mimivirus</taxon>
        <taxon>Mimivirus bradfordmassiliense</taxon>
    </lineage>
</organism>